<dbReference type="EMBL" id="X75781">
    <property type="protein sequence ID" value="CAA53416.1"/>
    <property type="molecule type" value="Genomic_DNA"/>
</dbReference>
<dbReference type="EMBL" id="Z28056">
    <property type="protein sequence ID" value="CAA81893.1"/>
    <property type="molecule type" value="Genomic_DNA"/>
</dbReference>
<dbReference type="EMBL" id="BK006944">
    <property type="protein sequence ID" value="DAA09101.1"/>
    <property type="molecule type" value="Genomic_DNA"/>
</dbReference>
<dbReference type="PIR" id="S37878">
    <property type="entry name" value="S37878"/>
</dbReference>
<dbReference type="RefSeq" id="NP_012867.1">
    <property type="nucleotide sequence ID" value="NM_001179622.1"/>
</dbReference>
<dbReference type="SMR" id="P35691"/>
<dbReference type="BioGRID" id="34077">
    <property type="interactions" value="275"/>
</dbReference>
<dbReference type="DIP" id="DIP-2116N"/>
<dbReference type="FunCoup" id="P35691">
    <property type="interactions" value="1075"/>
</dbReference>
<dbReference type="IntAct" id="P35691">
    <property type="interactions" value="40"/>
</dbReference>
<dbReference type="MINT" id="P35691"/>
<dbReference type="STRING" id="4932.YKL056C"/>
<dbReference type="iPTMnet" id="P35691"/>
<dbReference type="PaxDb" id="4932-YKL056C"/>
<dbReference type="PeptideAtlas" id="P35691"/>
<dbReference type="TopDownProteomics" id="P35691"/>
<dbReference type="EnsemblFungi" id="YKL056C_mRNA">
    <property type="protein sequence ID" value="YKL056C"/>
    <property type="gene ID" value="YKL056C"/>
</dbReference>
<dbReference type="GeneID" id="853809"/>
<dbReference type="KEGG" id="sce:YKL056C"/>
<dbReference type="AGR" id="SGD:S000001539"/>
<dbReference type="SGD" id="S000001539">
    <property type="gene designation" value="TMA19"/>
</dbReference>
<dbReference type="VEuPathDB" id="FungiDB:YKL056C"/>
<dbReference type="eggNOG" id="KOG1727">
    <property type="taxonomic scope" value="Eukaryota"/>
</dbReference>
<dbReference type="GeneTree" id="ENSGT00390000006051"/>
<dbReference type="HOGENOM" id="CLU_095877_0_0_1"/>
<dbReference type="InParanoid" id="P35691"/>
<dbReference type="OMA" id="CAMITEG"/>
<dbReference type="OrthoDB" id="10248936at2759"/>
<dbReference type="BioCyc" id="YEAST:G3O-31855-MONOMER"/>
<dbReference type="BioGRID-ORCS" id="853809">
    <property type="hits" value="2 hits in 10 CRISPR screens"/>
</dbReference>
<dbReference type="CD-CODE" id="E03F929F">
    <property type="entry name" value="Stress granule"/>
</dbReference>
<dbReference type="PRO" id="PR:P35691"/>
<dbReference type="Proteomes" id="UP000002311">
    <property type="component" value="Chromosome XI"/>
</dbReference>
<dbReference type="RNAct" id="P35691">
    <property type="molecule type" value="protein"/>
</dbReference>
<dbReference type="GO" id="GO:0005737">
    <property type="term" value="C:cytoplasm"/>
    <property type="evidence" value="ECO:0007005"/>
    <property type="project" value="SGD"/>
</dbReference>
<dbReference type="GO" id="GO:0010494">
    <property type="term" value="C:cytoplasmic stress granule"/>
    <property type="evidence" value="ECO:0007005"/>
    <property type="project" value="SGD"/>
</dbReference>
<dbReference type="GO" id="GO:0005829">
    <property type="term" value="C:cytosol"/>
    <property type="evidence" value="ECO:0000314"/>
    <property type="project" value="SGD"/>
</dbReference>
<dbReference type="GO" id="GO:0005874">
    <property type="term" value="C:microtubule"/>
    <property type="evidence" value="ECO:0007669"/>
    <property type="project" value="UniProtKB-KW"/>
</dbReference>
<dbReference type="GO" id="GO:0005739">
    <property type="term" value="C:mitochondrion"/>
    <property type="evidence" value="ECO:0000314"/>
    <property type="project" value="SGD"/>
</dbReference>
<dbReference type="GO" id="GO:0005509">
    <property type="term" value="F:calcium ion binding"/>
    <property type="evidence" value="ECO:0000318"/>
    <property type="project" value="GO_Central"/>
</dbReference>
<dbReference type="GO" id="GO:0002181">
    <property type="term" value="P:cytoplasmic translation"/>
    <property type="evidence" value="ECO:0000315"/>
    <property type="project" value="SGD"/>
</dbReference>
<dbReference type="GO" id="GO:0010507">
    <property type="term" value="P:negative regulation of autophagy"/>
    <property type="evidence" value="ECO:0000315"/>
    <property type="project" value="SGD"/>
</dbReference>
<dbReference type="GO" id="GO:0007026">
    <property type="term" value="P:negative regulation of microtubule depolymerization"/>
    <property type="evidence" value="ECO:0000315"/>
    <property type="project" value="UniProtKB"/>
</dbReference>
<dbReference type="FunFam" id="2.170.150.10:FF:000002">
    <property type="entry name" value="Translationally-controlled tumor protein homolog"/>
    <property type="match status" value="1"/>
</dbReference>
<dbReference type="Gene3D" id="2.170.150.10">
    <property type="entry name" value="Metal Binding Protein, Guanine Nucleotide Exchange Factor, Chain A"/>
    <property type="match status" value="1"/>
</dbReference>
<dbReference type="InterPro" id="IPR011057">
    <property type="entry name" value="Mss4-like_sf"/>
</dbReference>
<dbReference type="InterPro" id="IPR011323">
    <property type="entry name" value="Mss4/transl-control_tumour"/>
</dbReference>
<dbReference type="InterPro" id="IPR034737">
    <property type="entry name" value="TCTP"/>
</dbReference>
<dbReference type="InterPro" id="IPR018103">
    <property type="entry name" value="Translation_control_tumour_CS"/>
</dbReference>
<dbReference type="InterPro" id="IPR018105">
    <property type="entry name" value="Translational_control_tumour_p"/>
</dbReference>
<dbReference type="PANTHER" id="PTHR11991">
    <property type="entry name" value="TRANSLATIONALLY CONTROLLED TUMOR PROTEIN-RELATED"/>
    <property type="match status" value="1"/>
</dbReference>
<dbReference type="PANTHER" id="PTHR11991:SF0">
    <property type="entry name" value="TRANSLATIONALLY-CONTROLLED TUMOR PROTEIN"/>
    <property type="match status" value="1"/>
</dbReference>
<dbReference type="Pfam" id="PF00838">
    <property type="entry name" value="TCTP"/>
    <property type="match status" value="1"/>
</dbReference>
<dbReference type="PRINTS" id="PR01653">
    <property type="entry name" value="TCTPROTEIN"/>
</dbReference>
<dbReference type="SUPFAM" id="SSF51316">
    <property type="entry name" value="Mss4-like"/>
    <property type="match status" value="1"/>
</dbReference>
<dbReference type="PROSITE" id="PS01002">
    <property type="entry name" value="TCTP_1"/>
    <property type="match status" value="1"/>
</dbReference>
<dbReference type="PROSITE" id="PS01003">
    <property type="entry name" value="TCTP_2"/>
    <property type="match status" value="1"/>
</dbReference>
<dbReference type="PROSITE" id="PS51797">
    <property type="entry name" value="TCTP_3"/>
    <property type="match status" value="1"/>
</dbReference>
<keyword id="KW-0963">Cytoplasm</keyword>
<keyword id="KW-0206">Cytoskeleton</keyword>
<keyword id="KW-0903">Direct protein sequencing</keyword>
<keyword id="KW-0493">Microtubule</keyword>
<keyword id="KW-0496">Mitochondrion</keyword>
<keyword id="KW-0597">Phosphoprotein</keyword>
<keyword id="KW-0648">Protein biosynthesis</keyword>
<keyword id="KW-1185">Reference proteome</keyword>
<protein>
    <recommendedName>
        <fullName>Translationally-controlled tumor protein homolog</fullName>
        <shortName>TCTP</shortName>
    </recommendedName>
    <alternativeName>
        <fullName>Microtubule and mitochondria-interacting protein 1</fullName>
    </alternativeName>
    <alternativeName>
        <fullName>Translation machinery-associated protein 19</fullName>
    </alternativeName>
</protein>
<feature type="chain" id="PRO_0000211311" description="Translationally-controlled tumor protein homolog">
    <location>
        <begin position="1"/>
        <end position="167"/>
    </location>
</feature>
<feature type="domain" description="TCTP" evidence="1">
    <location>
        <begin position="1"/>
        <end position="167"/>
    </location>
</feature>
<feature type="modified residue" description="Phosphoserine" evidence="6">
    <location>
        <position position="9"/>
    </location>
</feature>
<feature type="modified residue" description="Phosphoserine" evidence="6">
    <location>
        <position position="15"/>
    </location>
</feature>
<feature type="sequence conflict" description="In Ref. 4; AA sequence." evidence="5" ref="4">
    <original>DA</original>
    <variation>AD</variation>
    <location>
        <begin position="19"/>
        <end position="20"/>
    </location>
</feature>
<feature type="sequence conflict" description="In Ref. 4; AA sequence." evidence="5" ref="4">
    <original>S</original>
    <variation>G</variation>
    <location>
        <position position="70"/>
    </location>
</feature>
<evidence type="ECO:0000255" key="1">
    <source>
        <dbReference type="PROSITE-ProRule" id="PRU01133"/>
    </source>
</evidence>
<evidence type="ECO:0000269" key="2">
    <source>
    </source>
</evidence>
<evidence type="ECO:0000269" key="3">
    <source>
    </source>
</evidence>
<evidence type="ECO:0000269" key="4">
    <source>
    </source>
</evidence>
<evidence type="ECO:0000305" key="5"/>
<evidence type="ECO:0007744" key="6">
    <source>
    </source>
</evidence>
<gene>
    <name type="primary">TMA19</name>
    <name type="synonym">MMI1</name>
    <name type="ordered locus">YKL056C</name>
    <name type="ORF">YKL312</name>
</gene>
<organism>
    <name type="scientific">Saccharomyces cerevisiae (strain ATCC 204508 / S288c)</name>
    <name type="common">Baker's yeast</name>
    <dbReference type="NCBI Taxonomy" id="559292"/>
    <lineage>
        <taxon>Eukaryota</taxon>
        <taxon>Fungi</taxon>
        <taxon>Dikarya</taxon>
        <taxon>Ascomycota</taxon>
        <taxon>Saccharomycotina</taxon>
        <taxon>Saccharomycetes</taxon>
        <taxon>Saccharomycetales</taxon>
        <taxon>Saccharomycetaceae</taxon>
        <taxon>Saccharomyces</taxon>
    </lineage>
</organism>
<name>TCTP_YEAST</name>
<sequence length="167" mass="18741">MIIYKDIFSNDELLSDAYDAKLVDDVIYEADCAMVNVGGDNIDIGANPSAEGGDDDVEEGAEMVNNVVHSFRLQQTAFDKKSFLTYIKGYMKAVKAKLQETNPEEVPKFEKGAQTYVKKVIGSFKDWEFFTGESMDPDAMVVMLNYREDGTTPFVAIWKHGIVEEKI</sequence>
<comment type="function">
    <text evidence="3 4">Involved in protein synthesis. Involved in microtubule stabilization.</text>
</comment>
<comment type="subunit">
    <text evidence="3">Interacts with the 40S and 60S ribosomal subunits. Interacts with microtubules.</text>
</comment>
<comment type="subcellular location">
    <subcellularLocation>
        <location evidence="4">Cytoplasm</location>
        <location evidence="4">Cytoskeleton</location>
    </subcellularLocation>
    <subcellularLocation>
        <location evidence="4">Mitochondrion</location>
    </subcellularLocation>
    <text evidence="4">After induction of apoptosis or mild oxidative stress, reversibly translocates from the cytoplasm to mitochondria, where it is associated with the outer surface.</text>
</comment>
<comment type="miscellaneous">
    <text evidence="2">Present with 27800 molecules/cell in log phase SD medium.</text>
</comment>
<comment type="similarity">
    <text evidence="1">Belongs to the TCTP family.</text>
</comment>
<proteinExistence type="evidence at protein level"/>
<reference key="1">
    <citation type="journal article" date="1994" name="Yeast">
        <title>Sequence of a 28.6 kb region of yeast chromosome XI includes the FBA1 and TOA2 genes, an open reading frame (ORF) similar to a translationally controlled tumour protein, one ORF containing motifs also found in plant storage proteins and 13 ORFs with weak or no homology to known proteins.</title>
        <authorList>
            <person name="Rasmussen S.W."/>
        </authorList>
    </citation>
    <scope>NUCLEOTIDE SEQUENCE [GENOMIC DNA]</scope>
    <source>
        <strain>ATCC 204508 / S288c</strain>
    </source>
</reference>
<reference key="2">
    <citation type="journal article" date="1994" name="Nature">
        <title>Complete DNA sequence of yeast chromosome XI.</title>
        <authorList>
            <person name="Dujon B."/>
            <person name="Alexandraki D."/>
            <person name="Andre B."/>
            <person name="Ansorge W."/>
            <person name="Baladron V."/>
            <person name="Ballesta J.P.G."/>
            <person name="Banrevi A."/>
            <person name="Bolle P.-A."/>
            <person name="Bolotin-Fukuhara M."/>
            <person name="Bossier P."/>
            <person name="Bou G."/>
            <person name="Boyer J."/>
            <person name="Buitrago M.J."/>
            <person name="Cheret G."/>
            <person name="Colleaux L."/>
            <person name="Daignan-Fornier B."/>
            <person name="del Rey F."/>
            <person name="Dion C."/>
            <person name="Domdey H."/>
            <person name="Duesterhoeft A."/>
            <person name="Duesterhus S."/>
            <person name="Entian K.-D."/>
            <person name="Erfle H."/>
            <person name="Esteban P.F."/>
            <person name="Feldmann H."/>
            <person name="Fernandes L."/>
            <person name="Fobo G.M."/>
            <person name="Fritz C."/>
            <person name="Fukuhara H."/>
            <person name="Gabel C."/>
            <person name="Gaillon L."/>
            <person name="Garcia-Cantalejo J.M."/>
            <person name="Garcia-Ramirez J.J."/>
            <person name="Gent M.E."/>
            <person name="Ghazvini M."/>
            <person name="Goffeau A."/>
            <person name="Gonzalez A."/>
            <person name="Grothues D."/>
            <person name="Guerreiro P."/>
            <person name="Hegemann J.H."/>
            <person name="Hewitt N."/>
            <person name="Hilger F."/>
            <person name="Hollenberg C.P."/>
            <person name="Horaitis O."/>
            <person name="Indge K.J."/>
            <person name="Jacquier A."/>
            <person name="James C.M."/>
            <person name="Jauniaux J.-C."/>
            <person name="Jimenez A."/>
            <person name="Keuchel H."/>
            <person name="Kirchrath L."/>
            <person name="Kleine K."/>
            <person name="Koetter P."/>
            <person name="Legrain P."/>
            <person name="Liebl S."/>
            <person name="Louis E.J."/>
            <person name="Maia e Silva A."/>
            <person name="Marck C."/>
            <person name="Monnier A.-L."/>
            <person name="Moestl D."/>
            <person name="Mueller S."/>
            <person name="Obermaier B."/>
            <person name="Oliver S.G."/>
            <person name="Pallier C."/>
            <person name="Pascolo S."/>
            <person name="Pfeiffer F."/>
            <person name="Philippsen P."/>
            <person name="Planta R.J."/>
            <person name="Pohl F.M."/>
            <person name="Pohl T.M."/>
            <person name="Poehlmann R."/>
            <person name="Portetelle D."/>
            <person name="Purnelle B."/>
            <person name="Puzos V."/>
            <person name="Ramezani Rad M."/>
            <person name="Rasmussen S.W."/>
            <person name="Remacha M.A."/>
            <person name="Revuelta J.L."/>
            <person name="Richard G.-F."/>
            <person name="Rieger M."/>
            <person name="Rodrigues-Pousada C."/>
            <person name="Rose M."/>
            <person name="Rupp T."/>
            <person name="Santos M.A."/>
            <person name="Schwager C."/>
            <person name="Sensen C."/>
            <person name="Skala J."/>
            <person name="Soares H."/>
            <person name="Sor F."/>
            <person name="Stegemann J."/>
            <person name="Tettelin H."/>
            <person name="Thierry A."/>
            <person name="Tzermia M."/>
            <person name="Urrestarazu L.A."/>
            <person name="van Dyck L."/>
            <person name="van Vliet-Reedijk J.C."/>
            <person name="Valens M."/>
            <person name="Vandenbol M."/>
            <person name="Vilela C."/>
            <person name="Vissers S."/>
            <person name="von Wettstein D."/>
            <person name="Voss H."/>
            <person name="Wiemann S."/>
            <person name="Xu G."/>
            <person name="Zimmermann J."/>
            <person name="Haasemann M."/>
            <person name="Becker I."/>
            <person name="Mewes H.-W."/>
        </authorList>
    </citation>
    <scope>NUCLEOTIDE SEQUENCE [LARGE SCALE GENOMIC DNA]</scope>
    <source>
        <strain>ATCC 204508 / S288c</strain>
    </source>
</reference>
<reference key="3">
    <citation type="journal article" date="2014" name="G3 (Bethesda)">
        <title>The reference genome sequence of Saccharomyces cerevisiae: Then and now.</title>
        <authorList>
            <person name="Engel S.R."/>
            <person name="Dietrich F.S."/>
            <person name="Fisk D.G."/>
            <person name="Binkley G."/>
            <person name="Balakrishnan R."/>
            <person name="Costanzo M.C."/>
            <person name="Dwight S.S."/>
            <person name="Hitz B.C."/>
            <person name="Karra K."/>
            <person name="Nash R.S."/>
            <person name="Weng S."/>
            <person name="Wong E.D."/>
            <person name="Lloyd P."/>
            <person name="Skrzypek M.S."/>
            <person name="Miyasato S.R."/>
            <person name="Simison M."/>
            <person name="Cherry J.M."/>
        </authorList>
    </citation>
    <scope>GENOME REANNOTATION</scope>
    <source>
        <strain>ATCC 204508 / S288c</strain>
    </source>
</reference>
<reference key="4">
    <citation type="submission" date="1994-03" db="PIR data bank">
        <authorList>
            <person name="Klier H."/>
            <person name="Lottspeich F."/>
        </authorList>
    </citation>
    <scope>PROTEIN SEQUENCE OF 1-50; 65-79 AND 112-118</scope>
</reference>
<reference key="5">
    <citation type="journal article" date="1997" name="J. Biol. Chem.">
        <title>Metabolic and regulatory changes associated with growth of Saccharomyces cerevisiae in 1.4 M NaCl. Evidence for osmotic induction of glycerol dissimilation via the dihydroxyacetone pathway.</title>
        <authorList>
            <person name="Norbeck J."/>
            <person name="Blomberg A."/>
        </authorList>
    </citation>
    <scope>PROTEIN SEQUENCE OF 6-17</scope>
    <source>
        <strain>ATCC 44827 / SKQ2N</strain>
    </source>
</reference>
<reference key="6">
    <citation type="journal article" date="2003" name="Nature">
        <title>Global analysis of protein localization in budding yeast.</title>
        <authorList>
            <person name="Huh W.-K."/>
            <person name="Falvo J.V."/>
            <person name="Gerke L.C."/>
            <person name="Carroll A.S."/>
            <person name="Howson R.W."/>
            <person name="Weissman J.S."/>
            <person name="O'Shea E.K."/>
        </authorList>
    </citation>
    <scope>SUBCELLULAR LOCATION [LARGE SCALE ANALYSIS]</scope>
</reference>
<reference key="7">
    <citation type="journal article" date="2003" name="Nature">
        <title>Global analysis of protein expression in yeast.</title>
        <authorList>
            <person name="Ghaemmaghami S."/>
            <person name="Huh W.-K."/>
            <person name="Bower K."/>
            <person name="Howson R.W."/>
            <person name="Belle A."/>
            <person name="Dephoure N."/>
            <person name="O'Shea E.K."/>
            <person name="Weissman J.S."/>
        </authorList>
    </citation>
    <scope>LEVEL OF PROTEIN EXPRESSION [LARGE SCALE ANALYSIS]</scope>
</reference>
<reference key="8">
    <citation type="journal article" date="2006" name="Biochim. Biophys. Acta">
        <title>MMI1 (YKL056c, TMA19), the yeast orthologue of the translationally controlled tumor protein (TCTP) has apoptotic functions and interacts with both microtubules and mitochondria.</title>
        <authorList>
            <person name="Rinnerthaler M."/>
            <person name="Jarolim S."/>
            <person name="Heeren G."/>
            <person name="Palle E."/>
            <person name="Perju S."/>
            <person name="Klinger H."/>
            <person name="Bogengruber E."/>
            <person name="Madeo F."/>
            <person name="Braun R.J."/>
            <person name="Breitenbach-Koller L."/>
            <person name="Breitenbach M."/>
            <person name="Laun P."/>
        </authorList>
    </citation>
    <scope>FUNCTION</scope>
    <scope>SUBCELLULAR LOCATION</scope>
</reference>
<reference key="9">
    <citation type="journal article" date="2006" name="Genes Dev.">
        <title>Systematic identification and functional screens of uncharacterized proteins associated with eukaryotic ribosomal complexes.</title>
        <authorList>
            <person name="Fleischer T.C."/>
            <person name="Weaver C.M."/>
            <person name="McAfee K.J."/>
            <person name="Jennings J.L."/>
            <person name="Link A.J."/>
        </authorList>
    </citation>
    <scope>FUNCTION</scope>
    <scope>IDENTIFICATION BY MASS SPECTROMETRY</scope>
    <scope>SUBUNIT</scope>
</reference>
<reference key="10">
    <citation type="journal article" date="2009" name="Science">
        <title>Global analysis of Cdk1 substrate phosphorylation sites provides insights into evolution.</title>
        <authorList>
            <person name="Holt L.J."/>
            <person name="Tuch B.B."/>
            <person name="Villen J."/>
            <person name="Johnson A.D."/>
            <person name="Gygi S.P."/>
            <person name="Morgan D.O."/>
        </authorList>
    </citation>
    <scope>PHOSPHORYLATION [LARGE SCALE ANALYSIS] AT SER-9 AND SER-15</scope>
    <scope>IDENTIFICATION BY MASS SPECTROMETRY [LARGE SCALE ANALYSIS]</scope>
</reference>
<accession>P35691</accession>
<accession>D6VXN1</accession>